<sequence>MQIEEIQNYPANLPVLVEDELFLYPFMITPIFINDSSNMKALDLAIKNDSMLFVAPSKLENGRNFDEIYNCGVIGTIMRKVPLPDGRVKILFQGYAKGKIIEQISNKPLEAKIELIKEDFLEGTKKEALLEVLKEKVKNLANISHYFSPDLLRTIEEGFDASRICDLILNTVRIKKQVAYEFFVLTDLEQKLVKLIDLIAQEIEANKIQKEIKNKVHSRIDKVNKEYFLKEQLRQIQKELGSDTQKEDEVREYQKRLELKKKFMHEDAYKEIKKQIEKFERIHQDNSEASMIQTYIETALDIPFEKISKKKLDIKEVSKQLNHDHYALNKPKERIEEYFAVRELLEKRKIAEKDGAKVILCLYGPPGVGKTSLANSVSKALKRELIRIALGGLEDVNELRGHRRTYIGAMPGRITQGLIEAKQINPVIVLDEIDKLNRSFRGDPSAVLLEILDPEQNSKFRDYYLNFNIDLSKVIFIATANDISNIPAPLRDRMEFIELSSYTPSEKFHIMKKYLIPDELKKHGLKSNELSIDDETIELIISDYTRESGVRNLRRKVAELCRKSAKKLLLENIKKVIINTKNLNEFLDKKVFEIEKNNGENQVGQVNGLAWTSVGGDVLKVEAVKIKGKGELTLTGSLGDVMKESARIAFSMIKVLIDEGKIKIPKKIIIDPKVNVYDSYNIHIHVPDGATPKDGPSAGITISTAIASIFSDKKVKADVAMTGEIDLKGKVLPIGGLKEKLIAAYKADIKTALIPRKNYERDLKDIPSEVRDNMEIIAVDTFSDVLEYTLV</sequence>
<comment type="function">
    <text evidence="1">ATP-dependent serine protease that mediates the selective degradation of mutant and abnormal proteins as well as certain short-lived regulatory proteins. Required for cellular homeostasis and for survival from DNA damage and developmental changes induced by stress. Degrades polypeptides processively to yield small peptide fragments that are 5 to 10 amino acids long. Binds to DNA in a double-stranded, site-specific manner.</text>
</comment>
<comment type="catalytic activity">
    <reaction evidence="1">
        <text>Hydrolysis of proteins in presence of ATP.</text>
        <dbReference type="EC" id="3.4.21.53"/>
    </reaction>
</comment>
<comment type="subunit">
    <text evidence="1">Homohexamer. Organized in a ring with a central cavity.</text>
</comment>
<comment type="subcellular location">
    <subcellularLocation>
        <location evidence="1">Cytoplasm</location>
    </subcellularLocation>
</comment>
<comment type="induction">
    <text evidence="1 4">By heat shock.</text>
</comment>
<comment type="similarity">
    <text evidence="1">Belongs to the peptidase S16 family.</text>
</comment>
<gene>
    <name evidence="1" type="primary">lon</name>
    <name type="ordered locus">Cj1073c</name>
</gene>
<reference key="1">
    <citation type="journal article" date="1998" name="FEMS Microbiol. Lett.">
        <title>Cloning and expression of the Campylobacter jejuni lon gene detected by RNA arbitrarily primed PCR.</title>
        <authorList>
            <person name="Thies F.L."/>
            <person name="Hartung H.-P."/>
            <person name="Giegerich G."/>
        </authorList>
    </citation>
    <scope>NUCLEOTIDE SEQUENCE [GENOMIC DNA]</scope>
    <scope>INDUCTION</scope>
</reference>
<reference key="2">
    <citation type="journal article" date="2000" name="Nature">
        <title>The genome sequence of the food-borne pathogen Campylobacter jejuni reveals hypervariable sequences.</title>
        <authorList>
            <person name="Parkhill J."/>
            <person name="Wren B.W."/>
            <person name="Mungall K.L."/>
            <person name="Ketley J.M."/>
            <person name="Churcher C.M."/>
            <person name="Basham D."/>
            <person name="Chillingworth T."/>
            <person name="Davies R.M."/>
            <person name="Feltwell T."/>
            <person name="Holroyd S."/>
            <person name="Jagels K."/>
            <person name="Karlyshev A.V."/>
            <person name="Moule S."/>
            <person name="Pallen M.J."/>
            <person name="Penn C.W."/>
            <person name="Quail M.A."/>
            <person name="Rajandream M.A."/>
            <person name="Rutherford K.M."/>
            <person name="van Vliet A.H.M."/>
            <person name="Whitehead S."/>
            <person name="Barrell B.G."/>
        </authorList>
    </citation>
    <scope>NUCLEOTIDE SEQUENCE [LARGE SCALE GENOMIC DNA]</scope>
    <source>
        <strain>ATCC 700819 / NCTC 11168</strain>
    </source>
</reference>
<name>LON_CAMJE</name>
<protein>
    <recommendedName>
        <fullName evidence="1">Lon protease</fullName>
        <ecNumber evidence="1">3.4.21.53</ecNumber>
    </recommendedName>
    <alternativeName>
        <fullName evidence="1">ATP-dependent protease La</fullName>
    </alternativeName>
</protein>
<evidence type="ECO:0000255" key="1">
    <source>
        <dbReference type="HAMAP-Rule" id="MF_01973"/>
    </source>
</evidence>
<evidence type="ECO:0000255" key="2">
    <source>
        <dbReference type="PROSITE-ProRule" id="PRU01122"/>
    </source>
</evidence>
<evidence type="ECO:0000255" key="3">
    <source>
        <dbReference type="PROSITE-ProRule" id="PRU01123"/>
    </source>
</evidence>
<evidence type="ECO:0000269" key="4">
    <source>
    </source>
</evidence>
<evidence type="ECO:0000305" key="5"/>
<proteinExistence type="evidence at transcript level"/>
<organism>
    <name type="scientific">Campylobacter jejuni subsp. jejuni serotype O:2 (strain ATCC 700819 / NCTC 11168)</name>
    <dbReference type="NCBI Taxonomy" id="192222"/>
    <lineage>
        <taxon>Bacteria</taxon>
        <taxon>Pseudomonadati</taxon>
        <taxon>Campylobacterota</taxon>
        <taxon>Epsilonproteobacteria</taxon>
        <taxon>Campylobacterales</taxon>
        <taxon>Campylobacteraceae</taxon>
        <taxon>Campylobacter</taxon>
    </lineage>
</organism>
<feature type="chain" id="PRO_0000076128" description="Lon protease">
    <location>
        <begin position="1"/>
        <end position="791"/>
    </location>
</feature>
<feature type="domain" description="Lon N-terminal" evidence="3">
    <location>
        <begin position="13"/>
        <end position="203"/>
    </location>
</feature>
<feature type="domain" description="Lon proteolytic" evidence="2">
    <location>
        <begin position="600"/>
        <end position="791"/>
    </location>
</feature>
<feature type="active site" evidence="1">
    <location>
        <position position="697"/>
    </location>
</feature>
<feature type="active site" evidence="1">
    <location>
        <position position="740"/>
    </location>
</feature>
<feature type="binding site" evidence="1">
    <location>
        <begin position="364"/>
        <end position="371"/>
    </location>
    <ligand>
        <name>ATP</name>
        <dbReference type="ChEBI" id="CHEBI:30616"/>
    </ligand>
</feature>
<feature type="sequence conflict" description="In Ref. 1; CAA76672." evidence="5" ref="1">
    <original>I</original>
    <variation>V</variation>
    <location>
        <position position="302"/>
    </location>
</feature>
<feature type="sequence conflict" description="In Ref. 1; CAA76672." evidence="5" ref="1">
    <original>S</original>
    <variation>F</variation>
    <location>
        <position position="531"/>
    </location>
</feature>
<keyword id="KW-0067">ATP-binding</keyword>
<keyword id="KW-0963">Cytoplasm</keyword>
<keyword id="KW-0378">Hydrolase</keyword>
<keyword id="KW-0547">Nucleotide-binding</keyword>
<keyword id="KW-0645">Protease</keyword>
<keyword id="KW-1185">Reference proteome</keyword>
<keyword id="KW-0720">Serine protease</keyword>
<keyword id="KW-0346">Stress response</keyword>
<dbReference type="EC" id="3.4.21.53" evidence="1"/>
<dbReference type="EMBL" id="Y17166">
    <property type="protein sequence ID" value="CAA76672.1"/>
    <property type="molecule type" value="Genomic_DNA"/>
</dbReference>
<dbReference type="EMBL" id="AL111168">
    <property type="protein sequence ID" value="CAL35190.1"/>
    <property type="molecule type" value="Genomic_DNA"/>
</dbReference>
<dbReference type="PIR" id="D81310">
    <property type="entry name" value="D81310"/>
</dbReference>
<dbReference type="RefSeq" id="WP_002868636.1">
    <property type="nucleotide sequence ID" value="NZ_SZUC01000001.1"/>
</dbReference>
<dbReference type="RefSeq" id="YP_002344466.1">
    <property type="nucleotide sequence ID" value="NC_002163.1"/>
</dbReference>
<dbReference type="SMR" id="O69300"/>
<dbReference type="IntAct" id="O69300">
    <property type="interactions" value="1"/>
</dbReference>
<dbReference type="STRING" id="192222.Cj1073c"/>
<dbReference type="MEROPS" id="S16.001"/>
<dbReference type="PaxDb" id="192222-Cj1073c"/>
<dbReference type="EnsemblBacteria" id="CAL35190">
    <property type="protein sequence ID" value="CAL35190"/>
    <property type="gene ID" value="Cj1073c"/>
</dbReference>
<dbReference type="GeneID" id="905364"/>
<dbReference type="KEGG" id="cje:Cj1073c"/>
<dbReference type="PATRIC" id="fig|192222.6.peg.1055"/>
<dbReference type="eggNOG" id="COG0466">
    <property type="taxonomic scope" value="Bacteria"/>
</dbReference>
<dbReference type="HOGENOM" id="CLU_004109_4_3_7"/>
<dbReference type="OrthoDB" id="9803599at2"/>
<dbReference type="Proteomes" id="UP000000799">
    <property type="component" value="Chromosome"/>
</dbReference>
<dbReference type="GO" id="GO:0005737">
    <property type="term" value="C:cytoplasm"/>
    <property type="evidence" value="ECO:0007669"/>
    <property type="project" value="UniProtKB-SubCell"/>
</dbReference>
<dbReference type="GO" id="GO:0005524">
    <property type="term" value="F:ATP binding"/>
    <property type="evidence" value="ECO:0007669"/>
    <property type="project" value="UniProtKB-UniRule"/>
</dbReference>
<dbReference type="GO" id="GO:0016887">
    <property type="term" value="F:ATP hydrolysis activity"/>
    <property type="evidence" value="ECO:0007669"/>
    <property type="project" value="UniProtKB-UniRule"/>
</dbReference>
<dbReference type="GO" id="GO:0004176">
    <property type="term" value="F:ATP-dependent peptidase activity"/>
    <property type="evidence" value="ECO:0007669"/>
    <property type="project" value="UniProtKB-UniRule"/>
</dbReference>
<dbReference type="GO" id="GO:0043565">
    <property type="term" value="F:sequence-specific DNA binding"/>
    <property type="evidence" value="ECO:0007669"/>
    <property type="project" value="UniProtKB-UniRule"/>
</dbReference>
<dbReference type="GO" id="GO:0004252">
    <property type="term" value="F:serine-type endopeptidase activity"/>
    <property type="evidence" value="ECO:0007669"/>
    <property type="project" value="UniProtKB-UniRule"/>
</dbReference>
<dbReference type="GO" id="GO:0034605">
    <property type="term" value="P:cellular response to heat"/>
    <property type="evidence" value="ECO:0007669"/>
    <property type="project" value="UniProtKB-UniRule"/>
</dbReference>
<dbReference type="GO" id="GO:0006515">
    <property type="term" value="P:protein quality control for misfolded or incompletely synthesized proteins"/>
    <property type="evidence" value="ECO:0007669"/>
    <property type="project" value="UniProtKB-UniRule"/>
</dbReference>
<dbReference type="CDD" id="cd19500">
    <property type="entry name" value="RecA-like_Lon"/>
    <property type="match status" value="1"/>
</dbReference>
<dbReference type="FunFam" id="3.40.50.300:FF:000021">
    <property type="entry name" value="Lon protease homolog"/>
    <property type="match status" value="1"/>
</dbReference>
<dbReference type="Gene3D" id="1.10.8.60">
    <property type="match status" value="1"/>
</dbReference>
<dbReference type="Gene3D" id="1.20.5.5270">
    <property type="match status" value="1"/>
</dbReference>
<dbReference type="Gene3D" id="1.20.58.1480">
    <property type="match status" value="1"/>
</dbReference>
<dbReference type="Gene3D" id="3.30.230.10">
    <property type="match status" value="1"/>
</dbReference>
<dbReference type="Gene3D" id="2.30.130.40">
    <property type="entry name" value="LON domain-like"/>
    <property type="match status" value="1"/>
</dbReference>
<dbReference type="Gene3D" id="3.40.50.300">
    <property type="entry name" value="P-loop containing nucleotide triphosphate hydrolases"/>
    <property type="match status" value="1"/>
</dbReference>
<dbReference type="HAMAP" id="MF_01973">
    <property type="entry name" value="lon_bact"/>
    <property type="match status" value="1"/>
</dbReference>
<dbReference type="InterPro" id="IPR003593">
    <property type="entry name" value="AAA+_ATPase"/>
</dbReference>
<dbReference type="InterPro" id="IPR003959">
    <property type="entry name" value="ATPase_AAA_core"/>
</dbReference>
<dbReference type="InterPro" id="IPR027543">
    <property type="entry name" value="Lon_bac"/>
</dbReference>
<dbReference type="InterPro" id="IPR004815">
    <property type="entry name" value="Lon_bac/euk-typ"/>
</dbReference>
<dbReference type="InterPro" id="IPR054594">
    <property type="entry name" value="Lon_lid"/>
</dbReference>
<dbReference type="InterPro" id="IPR008269">
    <property type="entry name" value="Lon_proteolytic"/>
</dbReference>
<dbReference type="InterPro" id="IPR027065">
    <property type="entry name" value="Lon_Prtase"/>
</dbReference>
<dbReference type="InterPro" id="IPR003111">
    <property type="entry name" value="Lon_prtase_N"/>
</dbReference>
<dbReference type="InterPro" id="IPR046336">
    <property type="entry name" value="Lon_prtase_N_sf"/>
</dbReference>
<dbReference type="InterPro" id="IPR027417">
    <property type="entry name" value="P-loop_NTPase"/>
</dbReference>
<dbReference type="InterPro" id="IPR008268">
    <property type="entry name" value="Peptidase_S16_AS"/>
</dbReference>
<dbReference type="InterPro" id="IPR015947">
    <property type="entry name" value="PUA-like_sf"/>
</dbReference>
<dbReference type="InterPro" id="IPR020568">
    <property type="entry name" value="Ribosomal_Su5_D2-typ_SF"/>
</dbReference>
<dbReference type="InterPro" id="IPR014721">
    <property type="entry name" value="Ribsml_uS5_D2-typ_fold_subgr"/>
</dbReference>
<dbReference type="NCBIfam" id="TIGR00763">
    <property type="entry name" value="lon"/>
    <property type="match status" value="1"/>
</dbReference>
<dbReference type="PANTHER" id="PTHR10046">
    <property type="entry name" value="ATP DEPENDENT LON PROTEASE FAMILY MEMBER"/>
    <property type="match status" value="1"/>
</dbReference>
<dbReference type="Pfam" id="PF00004">
    <property type="entry name" value="AAA"/>
    <property type="match status" value="1"/>
</dbReference>
<dbReference type="Pfam" id="PF05362">
    <property type="entry name" value="Lon_C"/>
    <property type="match status" value="1"/>
</dbReference>
<dbReference type="Pfam" id="PF22667">
    <property type="entry name" value="Lon_lid"/>
    <property type="match status" value="1"/>
</dbReference>
<dbReference type="Pfam" id="PF02190">
    <property type="entry name" value="LON_substr_bdg"/>
    <property type="match status" value="1"/>
</dbReference>
<dbReference type="PIRSF" id="PIRSF001174">
    <property type="entry name" value="Lon_proteas"/>
    <property type="match status" value="1"/>
</dbReference>
<dbReference type="PRINTS" id="PR00830">
    <property type="entry name" value="ENDOLAPTASE"/>
</dbReference>
<dbReference type="SMART" id="SM00382">
    <property type="entry name" value="AAA"/>
    <property type="match status" value="1"/>
</dbReference>
<dbReference type="SMART" id="SM00464">
    <property type="entry name" value="LON"/>
    <property type="match status" value="1"/>
</dbReference>
<dbReference type="SUPFAM" id="SSF52540">
    <property type="entry name" value="P-loop containing nucleoside triphosphate hydrolases"/>
    <property type="match status" value="1"/>
</dbReference>
<dbReference type="SUPFAM" id="SSF88697">
    <property type="entry name" value="PUA domain-like"/>
    <property type="match status" value="1"/>
</dbReference>
<dbReference type="SUPFAM" id="SSF54211">
    <property type="entry name" value="Ribosomal protein S5 domain 2-like"/>
    <property type="match status" value="1"/>
</dbReference>
<dbReference type="PROSITE" id="PS51787">
    <property type="entry name" value="LON_N"/>
    <property type="match status" value="1"/>
</dbReference>
<dbReference type="PROSITE" id="PS51786">
    <property type="entry name" value="LON_PROTEOLYTIC"/>
    <property type="match status" value="1"/>
</dbReference>
<dbReference type="PROSITE" id="PS01046">
    <property type="entry name" value="LON_SER"/>
    <property type="match status" value="1"/>
</dbReference>
<accession>O69300</accession>
<accession>Q0P9I1</accession>
<accession>Q9PNM1</accession>